<feature type="chain" id="PRO_0000242232" description="Phosphomethylpyrimidine synthase">
    <location>
        <begin position="1"/>
        <end position="457"/>
    </location>
</feature>
<feature type="binding site" evidence="1">
    <location>
        <position position="80"/>
    </location>
    <ligand>
        <name>substrate</name>
    </ligand>
</feature>
<feature type="binding site" evidence="1">
    <location>
        <position position="109"/>
    </location>
    <ligand>
        <name>substrate</name>
    </ligand>
</feature>
<feature type="binding site" evidence="1">
    <location>
        <position position="139"/>
    </location>
    <ligand>
        <name>substrate</name>
    </ligand>
</feature>
<feature type="binding site" evidence="1">
    <location>
        <position position="175"/>
    </location>
    <ligand>
        <name>substrate</name>
    </ligand>
</feature>
<feature type="binding site" evidence="1">
    <location>
        <begin position="195"/>
        <end position="197"/>
    </location>
    <ligand>
        <name>substrate</name>
    </ligand>
</feature>
<feature type="binding site" evidence="1">
    <location>
        <begin position="236"/>
        <end position="239"/>
    </location>
    <ligand>
        <name>substrate</name>
    </ligand>
</feature>
<feature type="binding site" evidence="1">
    <location>
        <position position="275"/>
    </location>
    <ligand>
        <name>substrate</name>
    </ligand>
</feature>
<feature type="binding site" evidence="1">
    <location>
        <position position="279"/>
    </location>
    <ligand>
        <name>Zn(2+)</name>
        <dbReference type="ChEBI" id="CHEBI:29105"/>
    </ligand>
</feature>
<feature type="binding site" evidence="1">
    <location>
        <position position="302"/>
    </location>
    <ligand>
        <name>substrate</name>
    </ligand>
</feature>
<feature type="binding site" evidence="1">
    <location>
        <position position="343"/>
    </location>
    <ligand>
        <name>Zn(2+)</name>
        <dbReference type="ChEBI" id="CHEBI:29105"/>
    </ligand>
</feature>
<feature type="binding site" evidence="1">
    <location>
        <position position="423"/>
    </location>
    <ligand>
        <name>[4Fe-4S] cluster</name>
        <dbReference type="ChEBI" id="CHEBI:49883"/>
        <note>4Fe-4S-S-AdoMet</note>
    </ligand>
</feature>
<feature type="binding site" evidence="1">
    <location>
        <position position="426"/>
    </location>
    <ligand>
        <name>[4Fe-4S] cluster</name>
        <dbReference type="ChEBI" id="CHEBI:49883"/>
        <note>4Fe-4S-S-AdoMet</note>
    </ligand>
</feature>
<feature type="binding site" evidence="1">
    <location>
        <position position="431"/>
    </location>
    <ligand>
        <name>[4Fe-4S] cluster</name>
        <dbReference type="ChEBI" id="CHEBI:49883"/>
        <note>4Fe-4S-S-AdoMet</note>
    </ligand>
</feature>
<evidence type="ECO:0000255" key="1">
    <source>
        <dbReference type="HAMAP-Rule" id="MF_00089"/>
    </source>
</evidence>
<proteinExistence type="inferred from homology"/>
<dbReference type="EC" id="4.1.99.17" evidence="1"/>
<dbReference type="EMBL" id="CP000117">
    <property type="protein sequence ID" value="ABA19983.1"/>
    <property type="molecule type" value="Genomic_DNA"/>
</dbReference>
<dbReference type="SMR" id="Q3MGA3"/>
<dbReference type="STRING" id="240292.Ava_0357"/>
<dbReference type="KEGG" id="ava:Ava_0357"/>
<dbReference type="eggNOG" id="COG0422">
    <property type="taxonomic scope" value="Bacteria"/>
</dbReference>
<dbReference type="HOGENOM" id="CLU_013181_2_1_3"/>
<dbReference type="UniPathway" id="UPA00060"/>
<dbReference type="Proteomes" id="UP000002533">
    <property type="component" value="Chromosome"/>
</dbReference>
<dbReference type="GO" id="GO:0005829">
    <property type="term" value="C:cytosol"/>
    <property type="evidence" value="ECO:0007669"/>
    <property type="project" value="TreeGrafter"/>
</dbReference>
<dbReference type="GO" id="GO:0051539">
    <property type="term" value="F:4 iron, 4 sulfur cluster binding"/>
    <property type="evidence" value="ECO:0007669"/>
    <property type="project" value="UniProtKB-KW"/>
</dbReference>
<dbReference type="GO" id="GO:0016830">
    <property type="term" value="F:carbon-carbon lyase activity"/>
    <property type="evidence" value="ECO:0007669"/>
    <property type="project" value="InterPro"/>
</dbReference>
<dbReference type="GO" id="GO:0008270">
    <property type="term" value="F:zinc ion binding"/>
    <property type="evidence" value="ECO:0007669"/>
    <property type="project" value="UniProtKB-UniRule"/>
</dbReference>
<dbReference type="GO" id="GO:0009228">
    <property type="term" value="P:thiamine biosynthetic process"/>
    <property type="evidence" value="ECO:0007669"/>
    <property type="project" value="UniProtKB-KW"/>
</dbReference>
<dbReference type="GO" id="GO:0009229">
    <property type="term" value="P:thiamine diphosphate biosynthetic process"/>
    <property type="evidence" value="ECO:0007669"/>
    <property type="project" value="UniProtKB-UniRule"/>
</dbReference>
<dbReference type="FunFam" id="3.20.20.540:FF:000001">
    <property type="entry name" value="Phosphomethylpyrimidine synthase"/>
    <property type="match status" value="1"/>
</dbReference>
<dbReference type="Gene3D" id="6.10.250.620">
    <property type="match status" value="1"/>
</dbReference>
<dbReference type="Gene3D" id="3.20.20.540">
    <property type="entry name" value="Radical SAM ThiC family, central domain"/>
    <property type="match status" value="1"/>
</dbReference>
<dbReference type="HAMAP" id="MF_00089">
    <property type="entry name" value="ThiC"/>
    <property type="match status" value="1"/>
</dbReference>
<dbReference type="InterPro" id="IPR037509">
    <property type="entry name" value="ThiC"/>
</dbReference>
<dbReference type="InterPro" id="IPR038521">
    <property type="entry name" value="ThiC/Bza_core_dom"/>
</dbReference>
<dbReference type="InterPro" id="IPR002817">
    <property type="entry name" value="ThiC/BzaA/B"/>
</dbReference>
<dbReference type="NCBIfam" id="NF006763">
    <property type="entry name" value="PRK09284.1"/>
    <property type="match status" value="1"/>
</dbReference>
<dbReference type="NCBIfam" id="NF009895">
    <property type="entry name" value="PRK13352.1"/>
    <property type="match status" value="1"/>
</dbReference>
<dbReference type="NCBIfam" id="TIGR00190">
    <property type="entry name" value="thiC"/>
    <property type="match status" value="1"/>
</dbReference>
<dbReference type="PANTHER" id="PTHR30557:SF1">
    <property type="entry name" value="PHOSPHOMETHYLPYRIMIDINE SYNTHASE, CHLOROPLASTIC"/>
    <property type="match status" value="1"/>
</dbReference>
<dbReference type="PANTHER" id="PTHR30557">
    <property type="entry name" value="THIAMINE BIOSYNTHESIS PROTEIN THIC"/>
    <property type="match status" value="1"/>
</dbReference>
<dbReference type="Pfam" id="PF01964">
    <property type="entry name" value="ThiC_Rad_SAM"/>
    <property type="match status" value="1"/>
</dbReference>
<dbReference type="SFLD" id="SFLDF00407">
    <property type="entry name" value="phosphomethylpyrimidine_syntha"/>
    <property type="match status" value="1"/>
</dbReference>
<dbReference type="SFLD" id="SFLDG01114">
    <property type="entry name" value="phosphomethylpyrimidine_syntha"/>
    <property type="match status" value="1"/>
</dbReference>
<dbReference type="SFLD" id="SFLDS00113">
    <property type="entry name" value="Radical_SAM_Phosphomethylpyrim"/>
    <property type="match status" value="1"/>
</dbReference>
<organism>
    <name type="scientific">Trichormus variabilis (strain ATCC 29413 / PCC 7937)</name>
    <name type="common">Anabaena variabilis</name>
    <dbReference type="NCBI Taxonomy" id="240292"/>
    <lineage>
        <taxon>Bacteria</taxon>
        <taxon>Bacillati</taxon>
        <taxon>Cyanobacteriota</taxon>
        <taxon>Cyanophyceae</taxon>
        <taxon>Nostocales</taxon>
        <taxon>Nostocaceae</taxon>
        <taxon>Trichormus</taxon>
    </lineage>
</organism>
<accession>Q3MGA3</accession>
<protein>
    <recommendedName>
        <fullName evidence="1">Phosphomethylpyrimidine synthase</fullName>
        <ecNumber evidence="1">4.1.99.17</ecNumber>
    </recommendedName>
    <alternativeName>
        <fullName evidence="1">Hydroxymethylpyrimidine phosphate synthase</fullName>
        <shortName evidence="1">HMP-P synthase</shortName>
        <shortName evidence="1">HMP-phosphate synthase</shortName>
        <shortName evidence="1">HMPP synthase</shortName>
    </alternativeName>
    <alternativeName>
        <fullName evidence="1">Thiamine biosynthesis protein ThiC</fullName>
    </alternativeName>
</protein>
<name>THIC_TRIV2</name>
<gene>
    <name evidence="1" type="primary">thiC</name>
    <name type="ordered locus">Ava_0357</name>
</gene>
<reference key="1">
    <citation type="journal article" date="2014" name="Stand. Genomic Sci.">
        <title>Complete genome sequence of Anabaena variabilis ATCC 29413.</title>
        <authorList>
            <person name="Thiel T."/>
            <person name="Pratte B.S."/>
            <person name="Zhong J."/>
            <person name="Goodwin L."/>
            <person name="Copeland A."/>
            <person name="Lucas S."/>
            <person name="Han C."/>
            <person name="Pitluck S."/>
            <person name="Land M.L."/>
            <person name="Kyrpides N.C."/>
            <person name="Woyke T."/>
        </authorList>
    </citation>
    <scope>NUCLEOTIDE SEQUENCE [LARGE SCALE GENOMIC DNA]</scope>
    <source>
        <strain>ATCC 29413 / PCC 7937</strain>
    </source>
</reference>
<comment type="function">
    <text evidence="1">Catalyzes the synthesis of the hydroxymethylpyrimidine phosphate (HMP-P) moiety of thiamine from aminoimidazole ribotide (AIR) in a radical S-adenosyl-L-methionine (SAM)-dependent reaction.</text>
</comment>
<comment type="catalytic activity">
    <reaction evidence="1">
        <text>5-amino-1-(5-phospho-beta-D-ribosyl)imidazole + S-adenosyl-L-methionine = 4-amino-2-methyl-5-(phosphooxymethyl)pyrimidine + CO + 5'-deoxyadenosine + formate + L-methionine + 3 H(+)</text>
        <dbReference type="Rhea" id="RHEA:24840"/>
        <dbReference type="ChEBI" id="CHEBI:15378"/>
        <dbReference type="ChEBI" id="CHEBI:15740"/>
        <dbReference type="ChEBI" id="CHEBI:17245"/>
        <dbReference type="ChEBI" id="CHEBI:17319"/>
        <dbReference type="ChEBI" id="CHEBI:57844"/>
        <dbReference type="ChEBI" id="CHEBI:58354"/>
        <dbReference type="ChEBI" id="CHEBI:59789"/>
        <dbReference type="ChEBI" id="CHEBI:137981"/>
        <dbReference type="EC" id="4.1.99.17"/>
    </reaction>
</comment>
<comment type="cofactor">
    <cofactor evidence="1">
        <name>[4Fe-4S] cluster</name>
        <dbReference type="ChEBI" id="CHEBI:49883"/>
    </cofactor>
    <text evidence="1">Binds 1 [4Fe-4S] cluster per subunit. The cluster is coordinated with 3 cysteines and an exchangeable S-adenosyl-L-methionine.</text>
</comment>
<comment type="pathway">
    <text evidence="1">Cofactor biosynthesis; thiamine diphosphate biosynthesis.</text>
</comment>
<comment type="similarity">
    <text evidence="1">Belongs to the ThiC family.</text>
</comment>
<keyword id="KW-0004">4Fe-4S</keyword>
<keyword id="KW-0408">Iron</keyword>
<keyword id="KW-0411">Iron-sulfur</keyword>
<keyword id="KW-0456">Lyase</keyword>
<keyword id="KW-0479">Metal-binding</keyword>
<keyword id="KW-0949">S-adenosyl-L-methionine</keyword>
<keyword id="KW-0784">Thiamine biosynthesis</keyword>
<keyword id="KW-0862">Zinc</keyword>
<sequence>MRTEWVAKRRGQGNVTQMHYARQGVITEEMQYVAQRENLPADLIREEVARGRMIIPANINHTNLEPMAIGIASKCKVNANIGASPNSSNLQEEVDKLNLAVKYGADTVMDLSTGGGNLDEIRTAIINASPVPIGTVPVYQALESVHGTIENLTPEDFLHIIEKHAQQGVDYQTIHAGILIEHLPLVRSRITGIVSRGGGILARWMLHHHKQNPLYTHFRDIIEIFKRYDVSFSLGDSLRPGCTHDASDDAQLAELKTLGQLTRKAWEHDVQVMVEGPGHVPMDQIEFNVKKQMEECSEAPFYVLGPLVTDIAPGYDHITSAIGAAMAGWYGTAMLCYVTPKEHLGLPNAEDVRNGLIAYKIAAHAADIARHRPGARDRDDELSKARYNFDWNRQFELSLDPERAKEYHDETLPADIYKTAEFCSMCGPKFCPMQTKVDADALTELEKFLAKEKEVMI</sequence>